<proteinExistence type="inferred from homology"/>
<organism>
    <name type="scientific">Takifugu rubripes</name>
    <name type="common">Japanese pufferfish</name>
    <name type="synonym">Fugu rubripes</name>
    <dbReference type="NCBI Taxonomy" id="31033"/>
    <lineage>
        <taxon>Eukaryota</taxon>
        <taxon>Metazoa</taxon>
        <taxon>Chordata</taxon>
        <taxon>Craniata</taxon>
        <taxon>Vertebrata</taxon>
        <taxon>Euteleostomi</taxon>
        <taxon>Actinopterygii</taxon>
        <taxon>Neopterygii</taxon>
        <taxon>Teleostei</taxon>
        <taxon>Neoteleostei</taxon>
        <taxon>Acanthomorphata</taxon>
        <taxon>Eupercaria</taxon>
        <taxon>Tetraodontiformes</taxon>
        <taxon>Tetradontoidea</taxon>
        <taxon>Tetraodontidae</taxon>
        <taxon>Takifugu</taxon>
    </lineage>
</organism>
<name>NOGG_TAKRU</name>
<keyword id="KW-0891">Chondrogenesis</keyword>
<keyword id="KW-0217">Developmental protein</keyword>
<keyword id="KW-0221">Differentiation</keyword>
<keyword id="KW-1015">Disulfide bond</keyword>
<keyword id="KW-0325">Glycoprotein</keyword>
<keyword id="KW-1185">Reference proteome</keyword>
<keyword id="KW-0964">Secreted</keyword>
<keyword id="KW-0732">Signal</keyword>
<comment type="function">
    <text>Inhibitor of bone morphogenetic proteins (BMP) signaling.</text>
</comment>
<comment type="subunit">
    <text evidence="1">Homodimer.</text>
</comment>
<comment type="subcellular location">
    <subcellularLocation>
        <location>Secreted</location>
    </subcellularLocation>
</comment>
<comment type="similarity">
    <text evidence="3">Belongs to the noggin family.</text>
</comment>
<feature type="signal peptide" evidence="2">
    <location>
        <begin position="1"/>
        <end position="26"/>
    </location>
</feature>
<feature type="chain" id="PRO_0000019820" description="Noggin">
    <location>
        <begin position="27"/>
        <end position="223"/>
    </location>
</feature>
<feature type="glycosylation site" description="N-linked (GlcNAc...) asparagine" evidence="2">
    <location>
        <position position="61"/>
    </location>
</feature>
<feature type="disulfide bond" evidence="1">
    <location>
        <begin position="143"/>
        <end position="180"/>
    </location>
</feature>
<feature type="disulfide bond" evidence="1">
    <location>
        <begin position="166"/>
        <end position="217"/>
    </location>
</feature>
<feature type="disulfide bond" evidence="1">
    <location>
        <begin position="172"/>
        <end position="219"/>
    </location>
</feature>
<feature type="disulfide bond" evidence="1">
    <location>
        <begin position="195"/>
        <end position="204"/>
    </location>
</feature>
<gene>
    <name type="primary">nog</name>
</gene>
<protein>
    <recommendedName>
        <fullName>Noggin</fullName>
    </recommendedName>
</protein>
<reference key="1">
    <citation type="journal article" date="1998" name="Dev. Biol.">
        <title>Follistatin and noggin are excluded from the zebrafish organizer.</title>
        <authorList>
            <person name="Bauer H."/>
            <person name="Meier A."/>
            <person name="Hild M."/>
            <person name="Stachel S."/>
            <person name="Economides A."/>
            <person name="Hazelett D."/>
            <person name="Harland R.M."/>
            <person name="Hammerschmidt M."/>
        </authorList>
    </citation>
    <scope>NUCLEOTIDE SEQUENCE [GENOMIC DNA]</scope>
</reference>
<sequence length="223" mass="25121">MDPPRLRVATYLLLLSVGLLLHGGACQPYYLLRPIPSDSLPIVELKEDPGPVFDPKERDLNETELKSVLGDFDSRFLSVLPPAEDGHAGNDELDDFDAQRWGGALPKEIRAVDFDAPQLGKKHKPSKKLKRRLQQWLWAYSFCPLAHAWTDLGSRFWPRFVRAGSCLSKRSCSVPEGMTCKPATSTHLTILRWRCVQRKVGLKCAWIPMQYPVITDCKCSCSG</sequence>
<dbReference type="EMBL" id="AF095337">
    <property type="protein sequence ID" value="AAC72965.1"/>
    <property type="molecule type" value="Genomic_DNA"/>
</dbReference>
<dbReference type="SMR" id="Q9YHT8"/>
<dbReference type="FunCoup" id="Q9YHT8">
    <property type="interactions" value="17"/>
</dbReference>
<dbReference type="STRING" id="31033.ENSTRUP00000006286"/>
<dbReference type="GlyCosmos" id="Q9YHT8">
    <property type="glycosylation" value="1 site, No reported glycans"/>
</dbReference>
<dbReference type="eggNOG" id="KOG4485">
    <property type="taxonomic scope" value="Eukaryota"/>
</dbReference>
<dbReference type="InParanoid" id="Q9YHT8"/>
<dbReference type="Proteomes" id="UP000005226">
    <property type="component" value="Unplaced"/>
</dbReference>
<dbReference type="GO" id="GO:0005615">
    <property type="term" value="C:extracellular space"/>
    <property type="evidence" value="ECO:0007669"/>
    <property type="project" value="TreeGrafter"/>
</dbReference>
<dbReference type="GO" id="GO:0051216">
    <property type="term" value="P:cartilage development"/>
    <property type="evidence" value="ECO:0007669"/>
    <property type="project" value="UniProtKB-KW"/>
</dbReference>
<dbReference type="GO" id="GO:0009953">
    <property type="term" value="P:dorsal/ventral pattern formation"/>
    <property type="evidence" value="ECO:0007669"/>
    <property type="project" value="TreeGrafter"/>
</dbReference>
<dbReference type="GO" id="GO:0030514">
    <property type="term" value="P:negative regulation of BMP signaling pathway"/>
    <property type="evidence" value="ECO:0007669"/>
    <property type="project" value="InterPro"/>
</dbReference>
<dbReference type="GO" id="GO:0045596">
    <property type="term" value="P:negative regulation of cell differentiation"/>
    <property type="evidence" value="ECO:0007669"/>
    <property type="project" value="InterPro"/>
</dbReference>
<dbReference type="GO" id="GO:0001649">
    <property type="term" value="P:osteoblast differentiation"/>
    <property type="evidence" value="ECO:0007669"/>
    <property type="project" value="TreeGrafter"/>
</dbReference>
<dbReference type="Gene3D" id="2.10.90.10">
    <property type="entry name" value="Cystine-knot cytokines"/>
    <property type="match status" value="1"/>
</dbReference>
<dbReference type="Gene3D" id="1.10.287.520">
    <property type="entry name" value="Helix hairpin bin"/>
    <property type="match status" value="1"/>
</dbReference>
<dbReference type="InterPro" id="IPR029034">
    <property type="entry name" value="Cystine-knot_cytokine"/>
</dbReference>
<dbReference type="InterPro" id="IPR008717">
    <property type="entry name" value="Noggin"/>
</dbReference>
<dbReference type="PANTHER" id="PTHR10494">
    <property type="entry name" value="BONE MORPHOGENETIC PROTEIN INHIBITOR, NOGGIN"/>
    <property type="match status" value="1"/>
</dbReference>
<dbReference type="PANTHER" id="PTHR10494:SF5">
    <property type="entry name" value="NOGGIN"/>
    <property type="match status" value="1"/>
</dbReference>
<dbReference type="Pfam" id="PF05806">
    <property type="entry name" value="Noggin"/>
    <property type="match status" value="1"/>
</dbReference>
<dbReference type="PIRSF" id="PIRSF008129">
    <property type="entry name" value="Noggin"/>
    <property type="match status" value="1"/>
</dbReference>
<dbReference type="SUPFAM" id="SSF57501">
    <property type="entry name" value="Cystine-knot cytokines"/>
    <property type="match status" value="1"/>
</dbReference>
<accession>Q9YHT8</accession>
<evidence type="ECO:0000250" key="1"/>
<evidence type="ECO:0000255" key="2"/>
<evidence type="ECO:0000305" key="3"/>